<organism>
    <name type="scientific">Euglena viridis</name>
    <name type="common">Cercaria viridis</name>
    <dbReference type="NCBI Taxonomy" id="3040"/>
    <lineage>
        <taxon>Eukaryota</taxon>
        <taxon>Discoba</taxon>
        <taxon>Euglenozoa</taxon>
        <taxon>Euglenida</taxon>
        <taxon>Spirocuta</taxon>
        <taxon>Euglenophyceae</taxon>
        <taxon>Euglenales</taxon>
        <taxon>Euglenaceae</taxon>
        <taxon>Euglena</taxon>
    </lineage>
</organism>
<sequence>SGAEVFGNNCSSCHVNGGNIIIPGHVLSQSAMEEYLDGGYTKEAIEYQVRNGKGPMPAWEGVLDESEIKEVTDYVYSQASGPWANAS</sequence>
<dbReference type="PIR" id="S15453">
    <property type="entry name" value="S15453"/>
</dbReference>
<dbReference type="SMR" id="P22343"/>
<dbReference type="GO" id="GO:0009543">
    <property type="term" value="C:chloroplast thylakoid lumen"/>
    <property type="evidence" value="ECO:0007669"/>
    <property type="project" value="UniProtKB-SubCell"/>
</dbReference>
<dbReference type="GO" id="GO:0009055">
    <property type="term" value="F:electron transfer activity"/>
    <property type="evidence" value="ECO:0007669"/>
    <property type="project" value="InterPro"/>
</dbReference>
<dbReference type="GO" id="GO:0020037">
    <property type="term" value="F:heme binding"/>
    <property type="evidence" value="ECO:0007669"/>
    <property type="project" value="InterPro"/>
</dbReference>
<dbReference type="GO" id="GO:0005506">
    <property type="term" value="F:iron ion binding"/>
    <property type="evidence" value="ECO:0007669"/>
    <property type="project" value="InterPro"/>
</dbReference>
<dbReference type="GO" id="GO:0015979">
    <property type="term" value="P:photosynthesis"/>
    <property type="evidence" value="ECO:0007669"/>
    <property type="project" value="UniProtKB-KW"/>
</dbReference>
<dbReference type="Gene3D" id="1.10.760.10">
    <property type="entry name" value="Cytochrome c-like domain"/>
    <property type="match status" value="1"/>
</dbReference>
<dbReference type="InterPro" id="IPR009056">
    <property type="entry name" value="Cyt_c-like_dom"/>
</dbReference>
<dbReference type="InterPro" id="IPR036909">
    <property type="entry name" value="Cyt_c-like_dom_sf"/>
</dbReference>
<dbReference type="InterPro" id="IPR023655">
    <property type="entry name" value="Cyt_C6"/>
</dbReference>
<dbReference type="InterPro" id="IPR008168">
    <property type="entry name" value="Cyt_C_IC"/>
</dbReference>
<dbReference type="PANTHER" id="PTHR34688">
    <property type="entry name" value="CYTOCHROME C6, CHLOROPLASTIC"/>
    <property type="match status" value="1"/>
</dbReference>
<dbReference type="PANTHER" id="PTHR34688:SF2">
    <property type="entry name" value="CYTOCHROME C6, CHLOROPLASTIC"/>
    <property type="match status" value="1"/>
</dbReference>
<dbReference type="Pfam" id="PF13442">
    <property type="entry name" value="Cytochrome_CBB3"/>
    <property type="match status" value="1"/>
</dbReference>
<dbReference type="PRINTS" id="PR00605">
    <property type="entry name" value="CYTCHROMECIC"/>
</dbReference>
<dbReference type="SUPFAM" id="SSF46626">
    <property type="entry name" value="Cytochrome c"/>
    <property type="match status" value="1"/>
</dbReference>
<dbReference type="PROSITE" id="PS51007">
    <property type="entry name" value="CYTC"/>
    <property type="match status" value="1"/>
</dbReference>
<gene>
    <name type="primary">petJ</name>
</gene>
<reference key="1">
    <citation type="journal article" date="1991" name="Biochem. J.">
        <title>Amino acid sequences of Euglena viridis ferredoxin and cytochromes c.</title>
        <authorList>
            <person name="Ambler R.P."/>
            <person name="Kamen M.D."/>
            <person name="Bartsch R.G."/>
            <person name="Meyer T.E."/>
        </authorList>
    </citation>
    <scope>PROTEIN SEQUENCE</scope>
    <scope>HEME BINDING</scope>
    <source>
        <strain>LJ-1</strain>
    </source>
</reference>
<name>CYC6_EUGVI</name>
<comment type="function">
    <text>Functions as an electron carrier between membrane-bound cytochrome b6-f and photosystem I in oxygenic photosynthesis.</text>
</comment>
<comment type="subunit">
    <text evidence="1">Monomer.</text>
</comment>
<comment type="subcellular location">
    <subcellularLocation>
        <location>Plastid</location>
        <location>Chloroplast thylakoid lumen</location>
    </subcellularLocation>
</comment>
<comment type="PTM">
    <text>Binds 1 heme c group covalently per subunit.</text>
</comment>
<comment type="similarity">
    <text evidence="3">Belongs to the cytochrome c family. PetJ subfamily.</text>
</comment>
<protein>
    <recommendedName>
        <fullName>Cytochrome c6</fullName>
    </recommendedName>
    <alternativeName>
        <fullName>Cytochrome c-553</fullName>
    </alternativeName>
    <alternativeName>
        <fullName>Cytochrome c553</fullName>
    </alternativeName>
    <alternativeName>
        <fullName>Soluble cytochrome f</fullName>
    </alternativeName>
</protein>
<proteinExistence type="evidence at protein level"/>
<feature type="chain" id="PRO_0000208676" description="Cytochrome c6">
    <location>
        <begin position="1"/>
        <end position="87"/>
    </location>
</feature>
<feature type="binding site" description="covalent">
    <location>
        <position position="10"/>
    </location>
    <ligand>
        <name>heme c</name>
        <dbReference type="ChEBI" id="CHEBI:61717"/>
    </ligand>
</feature>
<feature type="binding site" description="covalent">
    <location>
        <position position="13"/>
    </location>
    <ligand>
        <name>heme c</name>
        <dbReference type="ChEBI" id="CHEBI:61717"/>
    </ligand>
</feature>
<feature type="binding site" description="axial binding residue" evidence="2">
    <location>
        <position position="14"/>
    </location>
    <ligand>
        <name>heme c</name>
        <dbReference type="ChEBI" id="CHEBI:61717"/>
    </ligand>
    <ligandPart>
        <name>Fe</name>
        <dbReference type="ChEBI" id="CHEBI:18248"/>
    </ligandPart>
</feature>
<feature type="binding site" description="axial binding residue" evidence="2">
    <location>
        <position position="56"/>
    </location>
    <ligand>
        <name>heme c</name>
        <dbReference type="ChEBI" id="CHEBI:61717"/>
    </ligand>
    <ligandPart>
        <name>Fe</name>
        <dbReference type="ChEBI" id="CHEBI:18248"/>
    </ligandPart>
</feature>
<keyword id="KW-0150">Chloroplast</keyword>
<keyword id="KW-0903">Direct protein sequencing</keyword>
<keyword id="KW-0249">Electron transport</keyword>
<keyword id="KW-0349">Heme</keyword>
<keyword id="KW-0408">Iron</keyword>
<keyword id="KW-0479">Metal-binding</keyword>
<keyword id="KW-0602">Photosynthesis</keyword>
<keyword id="KW-0934">Plastid</keyword>
<keyword id="KW-0793">Thylakoid</keyword>
<keyword id="KW-0813">Transport</keyword>
<evidence type="ECO:0000250" key="1"/>
<evidence type="ECO:0000255" key="2">
    <source>
        <dbReference type="PROSITE-ProRule" id="PRU00433"/>
    </source>
</evidence>
<evidence type="ECO:0000305" key="3"/>
<accession>P22343</accession>